<protein>
    <recommendedName>
        <fullName>Methenyltetrahydromethanopterin cyclohydrolase</fullName>
        <ecNumber>3.5.4.27</ecNumber>
    </recommendedName>
    <alternativeName>
        <fullName>Methenyl-H4MPT cyclohydrolase</fullName>
    </alternativeName>
</protein>
<dbReference type="EC" id="3.5.4.27"/>
<dbReference type="EMBL" id="AF139592">
    <property type="protein sequence ID" value="AAD55893.1"/>
    <property type="molecule type" value="Genomic_DNA"/>
</dbReference>
<dbReference type="EMBL" id="CP000284">
    <property type="protein sequence ID" value="ABE49926.1"/>
    <property type="molecule type" value="Genomic_DNA"/>
</dbReference>
<dbReference type="RefSeq" id="WP_011479880.1">
    <property type="nucleotide sequence ID" value="NC_007947.1"/>
</dbReference>
<dbReference type="SMR" id="Q9RQ04"/>
<dbReference type="STRING" id="265072.Mfla_1658"/>
<dbReference type="KEGG" id="mfa:Mfla_1658"/>
<dbReference type="eggNOG" id="COG3252">
    <property type="taxonomic scope" value="Bacteria"/>
</dbReference>
<dbReference type="HOGENOM" id="CLU_876031_0_0_4"/>
<dbReference type="OrthoDB" id="241529at2"/>
<dbReference type="UniPathway" id="UPA00562">
    <property type="reaction ID" value="UER00703"/>
</dbReference>
<dbReference type="Proteomes" id="UP000002440">
    <property type="component" value="Chromosome"/>
</dbReference>
<dbReference type="GO" id="GO:0005737">
    <property type="term" value="C:cytoplasm"/>
    <property type="evidence" value="ECO:0007669"/>
    <property type="project" value="UniProtKB-SubCell"/>
</dbReference>
<dbReference type="GO" id="GO:0018759">
    <property type="term" value="F:methenyltetrahydromethanopterin cyclohydrolase activity"/>
    <property type="evidence" value="ECO:0007669"/>
    <property type="project" value="UniProtKB-UniRule"/>
</dbReference>
<dbReference type="GO" id="GO:0046294">
    <property type="term" value="P:formaldehyde catabolic process"/>
    <property type="evidence" value="ECO:0007669"/>
    <property type="project" value="UniProtKB-UniRule"/>
</dbReference>
<dbReference type="GO" id="GO:0006730">
    <property type="term" value="P:one-carbon metabolic process"/>
    <property type="evidence" value="ECO:0007669"/>
    <property type="project" value="UniProtKB-UniRule"/>
</dbReference>
<dbReference type="CDD" id="cd00545">
    <property type="entry name" value="MCH"/>
    <property type="match status" value="1"/>
</dbReference>
<dbReference type="Gene3D" id="3.10.340.11">
    <property type="entry name" value="Methenyltetrahydromethanopterin Cyclohydrolase, Chain A, domain 1"/>
    <property type="match status" value="1"/>
</dbReference>
<dbReference type="Gene3D" id="3.30.1030.10">
    <property type="entry name" value="Methenyltetrahydromethanopterin Cyclohydrolase, Chain A, domain 2"/>
    <property type="match status" value="1"/>
</dbReference>
<dbReference type="HAMAP" id="MF_00486">
    <property type="entry name" value="McH"/>
    <property type="match status" value="1"/>
</dbReference>
<dbReference type="InterPro" id="IPR003209">
    <property type="entry name" value="METHMP_CycHdrlase"/>
</dbReference>
<dbReference type="NCBIfam" id="TIGR03120">
    <property type="entry name" value="one_C_mch"/>
    <property type="match status" value="1"/>
</dbReference>
<dbReference type="Pfam" id="PF02289">
    <property type="entry name" value="MCH"/>
    <property type="match status" value="1"/>
</dbReference>
<dbReference type="SUPFAM" id="SSF56199">
    <property type="entry name" value="Methenyltetrahydromethanopterin cyclohydrolase"/>
    <property type="match status" value="1"/>
</dbReference>
<comment type="function">
    <text evidence="1">Catalyzes the hydrolysis of methenyl-H(4)MPT(+) to 5-formyl-H(4)MPT.</text>
</comment>
<comment type="catalytic activity">
    <reaction>
        <text>5,10-methenyl-5,6,7,8-tetrahydromethanopterin + H2O = N(5)-formyl-5,6,7,8-tetrahydromethanopterin + H(+)</text>
        <dbReference type="Rhea" id="RHEA:19053"/>
        <dbReference type="ChEBI" id="CHEBI:15377"/>
        <dbReference type="ChEBI" id="CHEBI:15378"/>
        <dbReference type="ChEBI" id="CHEBI:58018"/>
        <dbReference type="ChEBI" id="CHEBI:58337"/>
        <dbReference type="EC" id="3.5.4.27"/>
    </reaction>
</comment>
<comment type="pathway">
    <text>One-carbon metabolism; formaldehyde degradation; formate from formaldehyde (H(4)MPT route): step 3/5.</text>
</comment>
<comment type="subcellular location">
    <subcellularLocation>
        <location evidence="1">Cytoplasm</location>
    </subcellularLocation>
</comment>
<comment type="similarity">
    <text evidence="2">Belongs to the MCH family.</text>
</comment>
<feature type="chain" id="PRO_0000140890" description="Methenyltetrahydromethanopterin cyclohydrolase">
    <location>
        <begin position="1"/>
        <end position="327"/>
    </location>
</feature>
<evidence type="ECO:0000250" key="1"/>
<evidence type="ECO:0000305" key="2"/>
<keyword id="KW-0963">Cytoplasm</keyword>
<keyword id="KW-0378">Hydrolase</keyword>
<keyword id="KW-0554">One-carbon metabolism</keyword>
<keyword id="KW-1185">Reference proteome</keyword>
<accession>Q9RQ04</accession>
<accession>Q1H0R1</accession>
<organism>
    <name type="scientific">Methylobacillus flagellatus (strain ATCC 51484 / DSM 6875 / VKM B-1610 / KT)</name>
    <dbReference type="NCBI Taxonomy" id="265072"/>
    <lineage>
        <taxon>Bacteria</taxon>
        <taxon>Pseudomonadati</taxon>
        <taxon>Pseudomonadota</taxon>
        <taxon>Betaproteobacteria</taxon>
        <taxon>Nitrosomonadales</taxon>
        <taxon>Methylophilaceae</taxon>
        <taxon>Methylobacillus</taxon>
    </lineage>
</organism>
<gene>
    <name type="primary">mch</name>
    <name type="ordered locus">Mfla_1658</name>
</gene>
<reference key="1">
    <citation type="journal article" date="1999" name="J. Bacteriol.">
        <title>Distribution of tetrahydromethanopterin-dependent enzymes in methylotrophic bacteria and phylogeny of methenyl tetrahydromethanopterin cyclohydrolases.</title>
        <authorList>
            <person name="Vorholt J.A."/>
            <person name="Chistoserdova L.V."/>
            <person name="Stolyar S.M."/>
            <person name="Thauer R.K."/>
            <person name="Lidstrom M.E."/>
        </authorList>
    </citation>
    <scope>NUCLEOTIDE SEQUENCE [GENOMIC DNA]</scope>
</reference>
<reference key="2">
    <citation type="submission" date="2006-03" db="EMBL/GenBank/DDBJ databases">
        <title>Complete sequence of Methylobacillus flagellatus KT.</title>
        <authorList>
            <consortium name="US DOE Joint Genome Institute"/>
            <person name="Copeland A."/>
            <person name="Lucas S."/>
            <person name="Lapidus A."/>
            <person name="Barry K."/>
            <person name="Detter J.C."/>
            <person name="Glavina del Rio T."/>
            <person name="Hammon N."/>
            <person name="Israni S."/>
            <person name="Dalin E."/>
            <person name="Tice H."/>
            <person name="Pitluck S."/>
            <person name="Brettin T."/>
            <person name="Bruce D."/>
            <person name="Han C."/>
            <person name="Tapia R."/>
            <person name="Saunders E."/>
            <person name="Gilna P."/>
            <person name="Schmutz J."/>
            <person name="Larimer F."/>
            <person name="Land M."/>
            <person name="Kyrpides N."/>
            <person name="Anderson I."/>
            <person name="Richardson P."/>
        </authorList>
    </citation>
    <scope>NUCLEOTIDE SEQUENCE [LARGE SCALE GENOMIC DNA]</scope>
    <source>
        <strain>ATCC 51484 / DSM 6875 / VKM B-1610 / KT</strain>
    </source>
</reference>
<sequence length="327" mass="34910">MSESKLDVTLWPSVNQLTNPLVKHLVDNAKALRLLVEKLPSGATIIDAGIKAEGGLEAGRLIAEICMGGLGHVNLHSSSTFPHWPWTLSVHSNNPVLSCLGSQYAGWSLSHEKFFSLGSGPGRALAGREELYKELGYKDSADAAVLVLESDKVPPQEVIEKVARDTGVNPENLTFILTPTRSLAGTVQIVARVLEVALHKIHTLHFPLEHVVDGAASAPLPPPAPDFLIGMGRTNDAILFGGHAHIFVKGSDEAAAKLAKELPSSASRDYGRPFAEVFKAVNMDFYKIDPMLFSPAAVTVTAVESGKSFIGGKLDATLLDQSFGYSA</sequence>
<proteinExistence type="inferred from homology"/>
<name>MCH_METFK</name>